<proteinExistence type="inferred from homology"/>
<comment type="function">
    <text evidence="1">Binds to 23S rRNA. Forms part of two intersubunit bridges in the 70S ribosome.</text>
</comment>
<comment type="subunit">
    <text evidence="1">Part of the 50S ribosomal subunit. Forms a cluster with proteins L3 and L19. In the 70S ribosome, L14 and L19 interact and together make contacts with the 16S rRNA in bridges B5 and B8.</text>
</comment>
<comment type="similarity">
    <text evidence="1">Belongs to the universal ribosomal protein uL14 family.</text>
</comment>
<accession>Q8RIG5</accession>
<organism>
    <name type="scientific">Fusobacterium nucleatum subsp. nucleatum (strain ATCC 25586 / DSM 15643 / BCRC 10681 / CIP 101130 / JCM 8532 / KCTC 2640 / LMG 13131 / VPI 4355)</name>
    <dbReference type="NCBI Taxonomy" id="190304"/>
    <lineage>
        <taxon>Bacteria</taxon>
        <taxon>Fusobacteriati</taxon>
        <taxon>Fusobacteriota</taxon>
        <taxon>Fusobacteriia</taxon>
        <taxon>Fusobacteriales</taxon>
        <taxon>Fusobacteriaceae</taxon>
        <taxon>Fusobacterium</taxon>
    </lineage>
</organism>
<protein>
    <recommendedName>
        <fullName evidence="1">Large ribosomal subunit protein uL14</fullName>
    </recommendedName>
    <alternativeName>
        <fullName evidence="2">50S ribosomal protein L14</fullName>
    </alternativeName>
</protein>
<sequence length="122" mass="13417">MVQQQTILNVADNSGAKKLMVIRVLGGSRKRFGKIGDIVVASVKEAIPGGNVKKGDIVKAVIVRTRKETRRDDGSYIKFDDNAGVVINNNNEPRATRIFGPVARELRARNFMKILSLAIEVI</sequence>
<name>RL14_FUSNN</name>
<feature type="chain" id="PRO_0000266487" description="Large ribosomal subunit protein uL14">
    <location>
        <begin position="1"/>
        <end position="122"/>
    </location>
</feature>
<gene>
    <name evidence="1" type="primary">rplN</name>
    <name type="ordered locus">FN1635</name>
</gene>
<keyword id="KW-1185">Reference proteome</keyword>
<keyword id="KW-0687">Ribonucleoprotein</keyword>
<keyword id="KW-0689">Ribosomal protein</keyword>
<keyword id="KW-0694">RNA-binding</keyword>
<keyword id="KW-0699">rRNA-binding</keyword>
<evidence type="ECO:0000255" key="1">
    <source>
        <dbReference type="HAMAP-Rule" id="MF_01367"/>
    </source>
</evidence>
<evidence type="ECO:0000305" key="2"/>
<dbReference type="EMBL" id="AE009951">
    <property type="protein sequence ID" value="AAL93750.1"/>
    <property type="molecule type" value="Genomic_DNA"/>
</dbReference>
<dbReference type="RefSeq" id="NP_602451.1">
    <property type="nucleotide sequence ID" value="NC_003454.1"/>
</dbReference>
<dbReference type="RefSeq" id="WP_005904136.1">
    <property type="nucleotide sequence ID" value="NZ_OZ209243.1"/>
</dbReference>
<dbReference type="SMR" id="Q8RIG5"/>
<dbReference type="FunCoup" id="Q8RIG5">
    <property type="interactions" value="349"/>
</dbReference>
<dbReference type="STRING" id="190304.FN1635"/>
<dbReference type="PaxDb" id="190304-FN1635"/>
<dbReference type="EnsemblBacteria" id="AAL93750">
    <property type="protein sequence ID" value="AAL93750"/>
    <property type="gene ID" value="FN1635"/>
</dbReference>
<dbReference type="GeneID" id="79782573"/>
<dbReference type="KEGG" id="fnu:FN1635"/>
<dbReference type="PATRIC" id="fig|190304.8.peg.128"/>
<dbReference type="eggNOG" id="COG0093">
    <property type="taxonomic scope" value="Bacteria"/>
</dbReference>
<dbReference type="HOGENOM" id="CLU_095071_2_1_0"/>
<dbReference type="InParanoid" id="Q8RIG5"/>
<dbReference type="BioCyc" id="FNUC190304:G1FZS-138-MONOMER"/>
<dbReference type="Proteomes" id="UP000002521">
    <property type="component" value="Chromosome"/>
</dbReference>
<dbReference type="GO" id="GO:0022625">
    <property type="term" value="C:cytosolic large ribosomal subunit"/>
    <property type="evidence" value="ECO:0000318"/>
    <property type="project" value="GO_Central"/>
</dbReference>
<dbReference type="GO" id="GO:0070180">
    <property type="term" value="F:large ribosomal subunit rRNA binding"/>
    <property type="evidence" value="ECO:0000318"/>
    <property type="project" value="GO_Central"/>
</dbReference>
<dbReference type="GO" id="GO:0003735">
    <property type="term" value="F:structural constituent of ribosome"/>
    <property type="evidence" value="ECO:0000318"/>
    <property type="project" value="GO_Central"/>
</dbReference>
<dbReference type="GO" id="GO:0006412">
    <property type="term" value="P:translation"/>
    <property type="evidence" value="ECO:0007669"/>
    <property type="project" value="UniProtKB-UniRule"/>
</dbReference>
<dbReference type="CDD" id="cd00337">
    <property type="entry name" value="Ribosomal_uL14"/>
    <property type="match status" value="1"/>
</dbReference>
<dbReference type="FunFam" id="2.40.150.20:FF:000001">
    <property type="entry name" value="50S ribosomal protein L14"/>
    <property type="match status" value="1"/>
</dbReference>
<dbReference type="Gene3D" id="2.40.150.20">
    <property type="entry name" value="Ribosomal protein L14"/>
    <property type="match status" value="1"/>
</dbReference>
<dbReference type="HAMAP" id="MF_01367">
    <property type="entry name" value="Ribosomal_uL14"/>
    <property type="match status" value="1"/>
</dbReference>
<dbReference type="InterPro" id="IPR000218">
    <property type="entry name" value="Ribosomal_uL14"/>
</dbReference>
<dbReference type="InterPro" id="IPR005745">
    <property type="entry name" value="Ribosomal_uL14_bac-type"/>
</dbReference>
<dbReference type="InterPro" id="IPR019972">
    <property type="entry name" value="Ribosomal_uL14_CS"/>
</dbReference>
<dbReference type="InterPro" id="IPR036853">
    <property type="entry name" value="Ribosomal_uL14_sf"/>
</dbReference>
<dbReference type="NCBIfam" id="TIGR01067">
    <property type="entry name" value="rplN_bact"/>
    <property type="match status" value="1"/>
</dbReference>
<dbReference type="PANTHER" id="PTHR11761">
    <property type="entry name" value="50S/60S RIBOSOMAL PROTEIN L14/L23"/>
    <property type="match status" value="1"/>
</dbReference>
<dbReference type="PANTHER" id="PTHR11761:SF3">
    <property type="entry name" value="LARGE RIBOSOMAL SUBUNIT PROTEIN UL14M"/>
    <property type="match status" value="1"/>
</dbReference>
<dbReference type="Pfam" id="PF00238">
    <property type="entry name" value="Ribosomal_L14"/>
    <property type="match status" value="1"/>
</dbReference>
<dbReference type="SMART" id="SM01374">
    <property type="entry name" value="Ribosomal_L14"/>
    <property type="match status" value="1"/>
</dbReference>
<dbReference type="SUPFAM" id="SSF50193">
    <property type="entry name" value="Ribosomal protein L14"/>
    <property type="match status" value="1"/>
</dbReference>
<dbReference type="PROSITE" id="PS00049">
    <property type="entry name" value="RIBOSOMAL_L14"/>
    <property type="match status" value="1"/>
</dbReference>
<reference key="1">
    <citation type="journal article" date="2002" name="J. Bacteriol.">
        <title>Genome sequence and analysis of the oral bacterium Fusobacterium nucleatum strain ATCC 25586.</title>
        <authorList>
            <person name="Kapatral V."/>
            <person name="Anderson I."/>
            <person name="Ivanova N."/>
            <person name="Reznik G."/>
            <person name="Los T."/>
            <person name="Lykidis A."/>
            <person name="Bhattacharyya A."/>
            <person name="Bartman A."/>
            <person name="Gardner W."/>
            <person name="Grechkin G."/>
            <person name="Zhu L."/>
            <person name="Vasieva O."/>
            <person name="Chu L."/>
            <person name="Kogan Y."/>
            <person name="Chaga O."/>
            <person name="Goltsman E."/>
            <person name="Bernal A."/>
            <person name="Larsen N."/>
            <person name="D'Souza M."/>
            <person name="Walunas T."/>
            <person name="Pusch G."/>
            <person name="Haselkorn R."/>
            <person name="Fonstein M."/>
            <person name="Kyrpides N.C."/>
            <person name="Overbeek R."/>
        </authorList>
    </citation>
    <scope>NUCLEOTIDE SEQUENCE [LARGE SCALE GENOMIC DNA]</scope>
    <source>
        <strain>ATCC 25586 / DSM 15643 / BCRC 10681 / CIP 101130 / JCM 8532 / KCTC 2640 / LMG 13131 / VPI 4355</strain>
    </source>
</reference>